<dbReference type="EC" id="3.6.5.4" evidence="1"/>
<dbReference type="EMBL" id="AE014295">
    <property type="protein sequence ID" value="AAN24273.1"/>
    <property type="molecule type" value="Genomic_DNA"/>
</dbReference>
<dbReference type="RefSeq" id="NP_695637.1">
    <property type="nucleotide sequence ID" value="NC_004307.2"/>
</dbReference>
<dbReference type="SMR" id="Q8G736"/>
<dbReference type="STRING" id="206672.BL0436"/>
<dbReference type="EnsemblBacteria" id="AAN24273">
    <property type="protein sequence ID" value="AAN24273"/>
    <property type="gene ID" value="BL0436"/>
</dbReference>
<dbReference type="KEGG" id="blo:BL0436"/>
<dbReference type="PATRIC" id="fig|206672.9.peg.1181"/>
<dbReference type="HOGENOM" id="CLU_009301_1_3_11"/>
<dbReference type="OrthoDB" id="9804720at2"/>
<dbReference type="PhylomeDB" id="Q8G736"/>
<dbReference type="Proteomes" id="UP000000439">
    <property type="component" value="Chromosome"/>
</dbReference>
<dbReference type="GO" id="GO:0005737">
    <property type="term" value="C:cytoplasm"/>
    <property type="evidence" value="ECO:0007669"/>
    <property type="project" value="UniProtKB-SubCell"/>
</dbReference>
<dbReference type="GO" id="GO:0005886">
    <property type="term" value="C:plasma membrane"/>
    <property type="evidence" value="ECO:0007669"/>
    <property type="project" value="UniProtKB-SubCell"/>
</dbReference>
<dbReference type="GO" id="GO:0016887">
    <property type="term" value="F:ATP hydrolysis activity"/>
    <property type="evidence" value="ECO:0007669"/>
    <property type="project" value="InterPro"/>
</dbReference>
<dbReference type="GO" id="GO:0005525">
    <property type="term" value="F:GTP binding"/>
    <property type="evidence" value="ECO:0007669"/>
    <property type="project" value="UniProtKB-UniRule"/>
</dbReference>
<dbReference type="GO" id="GO:0003924">
    <property type="term" value="F:GTPase activity"/>
    <property type="evidence" value="ECO:0007669"/>
    <property type="project" value="UniProtKB-UniRule"/>
</dbReference>
<dbReference type="GO" id="GO:0005047">
    <property type="term" value="F:signal recognition particle binding"/>
    <property type="evidence" value="ECO:0007669"/>
    <property type="project" value="TreeGrafter"/>
</dbReference>
<dbReference type="GO" id="GO:0006614">
    <property type="term" value="P:SRP-dependent cotranslational protein targeting to membrane"/>
    <property type="evidence" value="ECO:0007669"/>
    <property type="project" value="InterPro"/>
</dbReference>
<dbReference type="FunFam" id="3.40.50.300:FF:000053">
    <property type="entry name" value="Signal recognition particle receptor FtsY"/>
    <property type="match status" value="1"/>
</dbReference>
<dbReference type="Gene3D" id="3.40.50.300">
    <property type="entry name" value="P-loop containing nucleotide triphosphate hydrolases"/>
    <property type="match status" value="1"/>
</dbReference>
<dbReference type="Gene3D" id="1.20.120.140">
    <property type="entry name" value="Signal recognition particle SRP54, nucleotide-binding domain"/>
    <property type="match status" value="1"/>
</dbReference>
<dbReference type="HAMAP" id="MF_00920">
    <property type="entry name" value="FtsY"/>
    <property type="match status" value="1"/>
</dbReference>
<dbReference type="InterPro" id="IPR003593">
    <property type="entry name" value="AAA+_ATPase"/>
</dbReference>
<dbReference type="InterPro" id="IPR027417">
    <property type="entry name" value="P-loop_NTPase"/>
</dbReference>
<dbReference type="InterPro" id="IPR013822">
    <property type="entry name" value="Signal_recog_particl_SRP54_hlx"/>
</dbReference>
<dbReference type="InterPro" id="IPR004390">
    <property type="entry name" value="SR_rcpt_FtsY"/>
</dbReference>
<dbReference type="InterPro" id="IPR036225">
    <property type="entry name" value="SRP/SRP_N"/>
</dbReference>
<dbReference type="InterPro" id="IPR000897">
    <property type="entry name" value="SRP54_GTPase_dom"/>
</dbReference>
<dbReference type="InterPro" id="IPR042101">
    <property type="entry name" value="SRP54_N_sf"/>
</dbReference>
<dbReference type="NCBIfam" id="TIGR00064">
    <property type="entry name" value="ftsY"/>
    <property type="match status" value="1"/>
</dbReference>
<dbReference type="PANTHER" id="PTHR43134">
    <property type="entry name" value="SIGNAL RECOGNITION PARTICLE RECEPTOR SUBUNIT ALPHA"/>
    <property type="match status" value="1"/>
</dbReference>
<dbReference type="PANTHER" id="PTHR43134:SF1">
    <property type="entry name" value="SIGNAL RECOGNITION PARTICLE RECEPTOR SUBUNIT ALPHA"/>
    <property type="match status" value="1"/>
</dbReference>
<dbReference type="Pfam" id="PF00448">
    <property type="entry name" value="SRP54"/>
    <property type="match status" value="1"/>
</dbReference>
<dbReference type="Pfam" id="PF02881">
    <property type="entry name" value="SRP54_N"/>
    <property type="match status" value="1"/>
</dbReference>
<dbReference type="SMART" id="SM00382">
    <property type="entry name" value="AAA"/>
    <property type="match status" value="1"/>
</dbReference>
<dbReference type="SMART" id="SM00962">
    <property type="entry name" value="SRP54"/>
    <property type="match status" value="1"/>
</dbReference>
<dbReference type="SMART" id="SM00963">
    <property type="entry name" value="SRP54_N"/>
    <property type="match status" value="1"/>
</dbReference>
<dbReference type="SUPFAM" id="SSF47364">
    <property type="entry name" value="Domain of the SRP/SRP receptor G-proteins"/>
    <property type="match status" value="1"/>
</dbReference>
<dbReference type="SUPFAM" id="SSF52540">
    <property type="entry name" value="P-loop containing nucleoside triphosphate hydrolases"/>
    <property type="match status" value="1"/>
</dbReference>
<dbReference type="PROSITE" id="PS00300">
    <property type="entry name" value="SRP54"/>
    <property type="match status" value="1"/>
</dbReference>
<organism>
    <name type="scientific">Bifidobacterium longum (strain NCC 2705)</name>
    <dbReference type="NCBI Taxonomy" id="206672"/>
    <lineage>
        <taxon>Bacteria</taxon>
        <taxon>Bacillati</taxon>
        <taxon>Actinomycetota</taxon>
        <taxon>Actinomycetes</taxon>
        <taxon>Bifidobacteriales</taxon>
        <taxon>Bifidobacteriaceae</taxon>
        <taxon>Bifidobacterium</taxon>
    </lineage>
</organism>
<accession>Q8G736</accession>
<protein>
    <recommendedName>
        <fullName evidence="1">Signal recognition particle receptor FtsY</fullName>
        <shortName evidence="1">SRP receptor</shortName>
        <ecNumber evidence="1">3.6.5.4</ecNumber>
    </recommendedName>
</protein>
<evidence type="ECO:0000255" key="1">
    <source>
        <dbReference type="HAMAP-Rule" id="MF_00920"/>
    </source>
</evidence>
<evidence type="ECO:0000256" key="2">
    <source>
        <dbReference type="SAM" id="MobiDB-lite"/>
    </source>
</evidence>
<gene>
    <name evidence="1" type="primary">ftsY</name>
    <name type="ordered locus">BL0436</name>
</gene>
<proteinExistence type="inferred from homology"/>
<comment type="function">
    <text evidence="1">Involved in targeting and insertion of nascent membrane proteins into the cytoplasmic membrane. Acts as a receptor for the complex formed by the signal recognition particle (SRP) and the ribosome-nascent chain (RNC).</text>
</comment>
<comment type="catalytic activity">
    <reaction evidence="1">
        <text>GTP + H2O = GDP + phosphate + H(+)</text>
        <dbReference type="Rhea" id="RHEA:19669"/>
        <dbReference type="ChEBI" id="CHEBI:15377"/>
        <dbReference type="ChEBI" id="CHEBI:15378"/>
        <dbReference type="ChEBI" id="CHEBI:37565"/>
        <dbReference type="ChEBI" id="CHEBI:43474"/>
        <dbReference type="ChEBI" id="CHEBI:58189"/>
        <dbReference type="EC" id="3.6.5.4"/>
    </reaction>
</comment>
<comment type="subunit">
    <text evidence="1">Part of the signal recognition particle protein translocation system, which is composed of SRP and FtsY.</text>
</comment>
<comment type="subcellular location">
    <subcellularLocation>
        <location>Cell membrane</location>
        <topology>Peripheral membrane protein</topology>
        <orientation>Cytoplasmic side</orientation>
    </subcellularLocation>
    <subcellularLocation>
        <location evidence="1">Cytoplasm</location>
    </subcellularLocation>
</comment>
<comment type="similarity">
    <text evidence="1">Belongs to the GTP-binding SRP family. FtsY subfamily.</text>
</comment>
<reference key="1">
    <citation type="journal article" date="2002" name="Proc. Natl. Acad. Sci. U.S.A.">
        <title>The genome sequence of Bifidobacterium longum reflects its adaptation to the human gastrointestinal tract.</title>
        <authorList>
            <person name="Schell M.A."/>
            <person name="Karmirantzou M."/>
            <person name="Snel B."/>
            <person name="Vilanova D."/>
            <person name="Berger B."/>
            <person name="Pessi G."/>
            <person name="Zwahlen M.-C."/>
            <person name="Desiere F."/>
            <person name="Bork P."/>
            <person name="Delley M."/>
            <person name="Pridmore R.D."/>
            <person name="Arigoni F."/>
        </authorList>
    </citation>
    <scope>NUCLEOTIDE SEQUENCE [LARGE SCALE GENOMIC DNA]</scope>
    <source>
        <strain>NCC 2705</strain>
    </source>
</reference>
<name>FTSY_BIFLO</name>
<feature type="chain" id="PRO_0000416698" description="Signal recognition particle receptor FtsY">
    <location>
        <begin position="1"/>
        <end position="420"/>
    </location>
</feature>
<feature type="region of interest" description="Disordered" evidence="2">
    <location>
        <begin position="28"/>
        <end position="118"/>
    </location>
</feature>
<feature type="compositionally biased region" description="Basic and acidic residues" evidence="2">
    <location>
        <begin position="28"/>
        <end position="62"/>
    </location>
</feature>
<feature type="compositionally biased region" description="Low complexity" evidence="2">
    <location>
        <begin position="63"/>
        <end position="104"/>
    </location>
</feature>
<feature type="binding site" evidence="1">
    <location>
        <begin position="227"/>
        <end position="234"/>
    </location>
    <ligand>
        <name>GTP</name>
        <dbReference type="ChEBI" id="CHEBI:37565"/>
    </ligand>
</feature>
<feature type="binding site" evidence="1">
    <location>
        <begin position="310"/>
        <end position="314"/>
    </location>
    <ligand>
        <name>GTP</name>
        <dbReference type="ChEBI" id="CHEBI:37565"/>
    </ligand>
</feature>
<feature type="binding site" evidence="1">
    <location>
        <begin position="372"/>
        <end position="375"/>
    </location>
    <ligand>
        <name>GTP</name>
        <dbReference type="ChEBI" id="CHEBI:37565"/>
    </ligand>
</feature>
<keyword id="KW-1003">Cell membrane</keyword>
<keyword id="KW-0963">Cytoplasm</keyword>
<keyword id="KW-0342">GTP-binding</keyword>
<keyword id="KW-0378">Hydrolase</keyword>
<keyword id="KW-0472">Membrane</keyword>
<keyword id="KW-0547">Nucleotide-binding</keyword>
<keyword id="KW-0675">Receptor</keyword>
<keyword id="KW-1185">Reference proteome</keyword>
<sequence>MLAVLGVIVAAVIVIALSIWLGKSRKRDLDRAMGKVAPDNKKTRDAKAAADARLAAEAEEAKAATAAEPAKSAESAKAEPAPAAQAEPEPAAAPKPESQPASKPTPAKPETPESVGSRLTRLKAKLAKSGNPFGKALFDILAKDNLSEADWEDVEDTLLLADVGADASAQLVDDLRTDARITGKADPAEVRATLKEKLLDLVGRDTDRRLNAEKPGAAKPSVIIMVGVNGTGKTTTAGKLARLFVAENKQVMMGAADTFRAAAADQLETWGARVNVPVVRSDKDGADPASVAFEASAKAKEANADVLIIDTAGRLQNKSNLMDELGKIRRVTEKNLPVDEVLLVLDATTGQNGMAQAKVFAEAIGITGVVLSKLDGSAKGGIVVSVQKELGVPVKLVGLGEGPDDLAPFDPEGFVDGILA</sequence>